<keyword id="KW-0963">Cytoplasm</keyword>
<keyword id="KW-0444">Lipid biosynthesis</keyword>
<keyword id="KW-0443">Lipid metabolism</keyword>
<keyword id="KW-0594">Phospholipid biosynthesis</keyword>
<keyword id="KW-1208">Phospholipid metabolism</keyword>
<keyword id="KW-0808">Transferase</keyword>
<accession>A2RBZ0</accession>
<organism>
    <name type="scientific">Streptococcus pyogenes serotype M5 (strain Manfredo)</name>
    <dbReference type="NCBI Taxonomy" id="160491"/>
    <lineage>
        <taxon>Bacteria</taxon>
        <taxon>Bacillati</taxon>
        <taxon>Bacillota</taxon>
        <taxon>Bacilli</taxon>
        <taxon>Lactobacillales</taxon>
        <taxon>Streptococcaceae</taxon>
        <taxon>Streptococcus</taxon>
    </lineage>
</organism>
<sequence>MKRIAIDAMGGDNAPKAIVEGVNQAIEAFSDIEIQLYGDQTKINSYLIQSDRVAIIHTDEKIMSDDEPAKAVRRKKKASMVLAAKAVKEGKADAIISAGNTGALLAVGLFVVGRIKGVDRPGLLSTIPTVTGLGFDMLDLGANAENTAKHLHQYAILGSFYAKNVRGIANPRVGLLNNGTEETKGDPLRKATYELLTADNTISFVGNVEARELMSGVADVIVSDGFTGNAVLKSIEGTAISIMGQLKQIINSGGIKTKIGASLLKSSLYEMKKTLDYSSAGGAVLFGLKAPVVKSHGSSDVKAIFSTIKQVRTMLDTNVVGQLVEEFAKETQVND</sequence>
<feature type="chain" id="PRO_1000001844" description="Phosphate acyltransferase">
    <location>
        <begin position="1"/>
        <end position="335"/>
    </location>
</feature>
<proteinExistence type="inferred from homology"/>
<reference key="1">
    <citation type="journal article" date="2007" name="J. Bacteriol.">
        <title>Complete genome of acute rheumatic fever-associated serotype M5 Streptococcus pyogenes strain Manfredo.</title>
        <authorList>
            <person name="Holden M.T.G."/>
            <person name="Scott A."/>
            <person name="Cherevach I."/>
            <person name="Chillingworth T."/>
            <person name="Churcher C."/>
            <person name="Cronin A."/>
            <person name="Dowd L."/>
            <person name="Feltwell T."/>
            <person name="Hamlin N."/>
            <person name="Holroyd S."/>
            <person name="Jagels K."/>
            <person name="Moule S."/>
            <person name="Mungall K."/>
            <person name="Quail M.A."/>
            <person name="Price C."/>
            <person name="Rabbinowitsch E."/>
            <person name="Sharp S."/>
            <person name="Skelton J."/>
            <person name="Whitehead S."/>
            <person name="Barrell B.G."/>
            <person name="Kehoe M."/>
            <person name="Parkhill J."/>
        </authorList>
    </citation>
    <scope>NUCLEOTIDE SEQUENCE [LARGE SCALE GENOMIC DNA]</scope>
    <source>
        <strain>Manfredo</strain>
    </source>
</reference>
<gene>
    <name evidence="1" type="primary">plsX</name>
    <name type="ordered locus">SpyM50018</name>
</gene>
<protein>
    <recommendedName>
        <fullName evidence="1">Phosphate acyltransferase</fullName>
        <ecNumber evidence="1">2.3.1.274</ecNumber>
    </recommendedName>
    <alternativeName>
        <fullName evidence="1">Acyl-ACP phosphotransacylase</fullName>
    </alternativeName>
    <alternativeName>
        <fullName evidence="1">Acyl-[acyl-carrier-protein]--phosphate acyltransferase</fullName>
    </alternativeName>
    <alternativeName>
        <fullName evidence="1">Phosphate-acyl-ACP acyltransferase</fullName>
    </alternativeName>
</protein>
<dbReference type="EC" id="2.3.1.274" evidence="1"/>
<dbReference type="EMBL" id="AM295007">
    <property type="protein sequence ID" value="CAM29362.1"/>
    <property type="molecule type" value="Genomic_DNA"/>
</dbReference>
<dbReference type="RefSeq" id="WP_002987696.1">
    <property type="nucleotide sequence ID" value="NC_009332.1"/>
</dbReference>
<dbReference type="SMR" id="A2RBZ0"/>
<dbReference type="KEGG" id="spf:SpyM50018"/>
<dbReference type="HOGENOM" id="CLU_039379_1_1_9"/>
<dbReference type="UniPathway" id="UPA00085"/>
<dbReference type="GO" id="GO:0005737">
    <property type="term" value="C:cytoplasm"/>
    <property type="evidence" value="ECO:0007669"/>
    <property type="project" value="UniProtKB-SubCell"/>
</dbReference>
<dbReference type="GO" id="GO:0043811">
    <property type="term" value="F:phosphate:acyl-[acyl carrier protein] acyltransferase activity"/>
    <property type="evidence" value="ECO:0007669"/>
    <property type="project" value="UniProtKB-UniRule"/>
</dbReference>
<dbReference type="GO" id="GO:0006633">
    <property type="term" value="P:fatty acid biosynthetic process"/>
    <property type="evidence" value="ECO:0007669"/>
    <property type="project" value="UniProtKB-UniRule"/>
</dbReference>
<dbReference type="GO" id="GO:0008654">
    <property type="term" value="P:phospholipid biosynthetic process"/>
    <property type="evidence" value="ECO:0007669"/>
    <property type="project" value="UniProtKB-KW"/>
</dbReference>
<dbReference type="Gene3D" id="3.40.718.10">
    <property type="entry name" value="Isopropylmalate Dehydrogenase"/>
    <property type="match status" value="1"/>
</dbReference>
<dbReference type="HAMAP" id="MF_00019">
    <property type="entry name" value="PlsX"/>
    <property type="match status" value="1"/>
</dbReference>
<dbReference type="InterPro" id="IPR003664">
    <property type="entry name" value="FA_synthesis"/>
</dbReference>
<dbReference type="InterPro" id="IPR012281">
    <property type="entry name" value="Phospholipid_synth_PlsX-like"/>
</dbReference>
<dbReference type="NCBIfam" id="TIGR00182">
    <property type="entry name" value="plsX"/>
    <property type="match status" value="1"/>
</dbReference>
<dbReference type="PANTHER" id="PTHR30100">
    <property type="entry name" value="FATTY ACID/PHOSPHOLIPID SYNTHESIS PROTEIN PLSX"/>
    <property type="match status" value="1"/>
</dbReference>
<dbReference type="PANTHER" id="PTHR30100:SF1">
    <property type="entry name" value="PHOSPHATE ACYLTRANSFERASE"/>
    <property type="match status" value="1"/>
</dbReference>
<dbReference type="Pfam" id="PF02504">
    <property type="entry name" value="FA_synthesis"/>
    <property type="match status" value="1"/>
</dbReference>
<dbReference type="PIRSF" id="PIRSF002465">
    <property type="entry name" value="Phsphlp_syn_PlsX"/>
    <property type="match status" value="1"/>
</dbReference>
<dbReference type="SUPFAM" id="SSF53659">
    <property type="entry name" value="Isocitrate/Isopropylmalate dehydrogenase-like"/>
    <property type="match status" value="1"/>
</dbReference>
<evidence type="ECO:0000255" key="1">
    <source>
        <dbReference type="HAMAP-Rule" id="MF_00019"/>
    </source>
</evidence>
<comment type="function">
    <text evidence="1">Catalyzes the reversible formation of acyl-phosphate (acyl-PO(4)) from acyl-[acyl-carrier-protein] (acyl-ACP). This enzyme utilizes acyl-ACP as fatty acyl donor, but not acyl-CoA.</text>
</comment>
<comment type="catalytic activity">
    <reaction evidence="1">
        <text>a fatty acyl-[ACP] + phosphate = an acyl phosphate + holo-[ACP]</text>
        <dbReference type="Rhea" id="RHEA:42292"/>
        <dbReference type="Rhea" id="RHEA-COMP:9685"/>
        <dbReference type="Rhea" id="RHEA-COMP:14125"/>
        <dbReference type="ChEBI" id="CHEBI:43474"/>
        <dbReference type="ChEBI" id="CHEBI:59918"/>
        <dbReference type="ChEBI" id="CHEBI:64479"/>
        <dbReference type="ChEBI" id="CHEBI:138651"/>
        <dbReference type="EC" id="2.3.1.274"/>
    </reaction>
</comment>
<comment type="pathway">
    <text evidence="1">Lipid metabolism; phospholipid metabolism.</text>
</comment>
<comment type="subunit">
    <text evidence="1">Homodimer. Probably interacts with PlsY.</text>
</comment>
<comment type="subcellular location">
    <subcellularLocation>
        <location evidence="1">Cytoplasm</location>
    </subcellularLocation>
    <text evidence="1">Associated with the membrane possibly through PlsY.</text>
</comment>
<comment type="similarity">
    <text evidence="1">Belongs to the PlsX family.</text>
</comment>
<name>PLSX_STRPG</name>